<proteinExistence type="inferred from homology"/>
<gene>
    <name evidence="1" type="primary">tsaD</name>
    <name type="synonym">gcp</name>
    <name type="ordered locus">SaurJH9_2086</name>
</gene>
<evidence type="ECO:0000255" key="1">
    <source>
        <dbReference type="HAMAP-Rule" id="MF_01445"/>
    </source>
</evidence>
<protein>
    <recommendedName>
        <fullName evidence="1">tRNA N6-adenosine threonylcarbamoyltransferase</fullName>
        <ecNumber evidence="1">2.3.1.234</ecNumber>
    </recommendedName>
    <alternativeName>
        <fullName evidence="1">N6-L-threonylcarbamoyladenine synthase</fullName>
        <shortName evidence="1">t(6)A synthase</shortName>
    </alternativeName>
    <alternativeName>
        <fullName evidence="1">t(6)A37 threonylcarbamoyladenosine biosynthesis protein TsaD</fullName>
    </alternativeName>
    <alternativeName>
        <fullName evidence="1">tRNA threonylcarbamoyladenosine biosynthesis protein TsaD</fullName>
    </alternativeName>
</protein>
<name>TSAD_STAA9</name>
<accession>A5IUJ5</accession>
<organism>
    <name type="scientific">Staphylococcus aureus (strain JH9)</name>
    <dbReference type="NCBI Taxonomy" id="359786"/>
    <lineage>
        <taxon>Bacteria</taxon>
        <taxon>Bacillati</taxon>
        <taxon>Bacillota</taxon>
        <taxon>Bacilli</taxon>
        <taxon>Bacillales</taxon>
        <taxon>Staphylococcaceae</taxon>
        <taxon>Staphylococcus</taxon>
    </lineage>
</organism>
<comment type="function">
    <text evidence="1">Required for the formation of a threonylcarbamoyl group on adenosine at position 37 (t(6)A37) in tRNAs that read codons beginning with adenine. Is involved in the transfer of the threonylcarbamoyl moiety of threonylcarbamoyl-AMP (TC-AMP) to the N6 group of A37, together with TsaE and TsaB. TsaD likely plays a direct catalytic role in this reaction.</text>
</comment>
<comment type="catalytic activity">
    <reaction evidence="1">
        <text>L-threonylcarbamoyladenylate + adenosine(37) in tRNA = N(6)-L-threonylcarbamoyladenosine(37) in tRNA + AMP + H(+)</text>
        <dbReference type="Rhea" id="RHEA:37059"/>
        <dbReference type="Rhea" id="RHEA-COMP:10162"/>
        <dbReference type="Rhea" id="RHEA-COMP:10163"/>
        <dbReference type="ChEBI" id="CHEBI:15378"/>
        <dbReference type="ChEBI" id="CHEBI:73682"/>
        <dbReference type="ChEBI" id="CHEBI:74411"/>
        <dbReference type="ChEBI" id="CHEBI:74418"/>
        <dbReference type="ChEBI" id="CHEBI:456215"/>
        <dbReference type="EC" id="2.3.1.234"/>
    </reaction>
</comment>
<comment type="cofactor">
    <cofactor evidence="1">
        <name>Fe(2+)</name>
        <dbReference type="ChEBI" id="CHEBI:29033"/>
    </cofactor>
    <text evidence="1">Binds 1 Fe(2+) ion per subunit.</text>
</comment>
<comment type="subcellular location">
    <subcellularLocation>
        <location evidence="1">Cytoplasm</location>
    </subcellularLocation>
</comment>
<comment type="similarity">
    <text evidence="1">Belongs to the KAE1 / TsaD family.</text>
</comment>
<sequence length="341" mass="36939">MTKDILILAVETSCDETSVSVIKNGRDILSNTVLSQIESHKRFGGVVPEVASRHHVEGITTTINEALVDADVSMEDIDAIAVTEGPGLIGALLIGVNAAKALAFAYDKPLIPVHHIAGHIYANHIEEPLTFPLIALIVSGGHTELVYMKDHLSFEVIGETRDDAVGEAYDKVARTIGLNYPGGPQVDRLAAEGEDTYSFPRVWLDKDSYDFSFSGLKSAVINQLHNQRQKNIPIIEANVATSFQNSVVEVLTFKAIQACKEYSVQRLIVAGGVASNKGLRQSLADQCKVNDIQLTIPSPKLCTDNAAMIGVAGHYLYQQGRFADLALNGHSNIDLEEYSAE</sequence>
<dbReference type="EC" id="2.3.1.234" evidence="1"/>
<dbReference type="EMBL" id="CP000703">
    <property type="protein sequence ID" value="ABQ49868.1"/>
    <property type="molecule type" value="Genomic_DNA"/>
</dbReference>
<dbReference type="RefSeq" id="WP_000159042.1">
    <property type="nucleotide sequence ID" value="NC_009487.1"/>
</dbReference>
<dbReference type="SMR" id="A5IUJ5"/>
<dbReference type="KEGG" id="saj:SaurJH9_2086"/>
<dbReference type="HOGENOM" id="CLU_023208_0_2_9"/>
<dbReference type="GO" id="GO:0005737">
    <property type="term" value="C:cytoplasm"/>
    <property type="evidence" value="ECO:0007669"/>
    <property type="project" value="UniProtKB-SubCell"/>
</dbReference>
<dbReference type="GO" id="GO:0005506">
    <property type="term" value="F:iron ion binding"/>
    <property type="evidence" value="ECO:0007669"/>
    <property type="project" value="UniProtKB-UniRule"/>
</dbReference>
<dbReference type="GO" id="GO:0061711">
    <property type="term" value="F:N(6)-L-threonylcarbamoyladenine synthase activity"/>
    <property type="evidence" value="ECO:0007669"/>
    <property type="project" value="UniProtKB-EC"/>
</dbReference>
<dbReference type="GO" id="GO:0002949">
    <property type="term" value="P:tRNA threonylcarbamoyladenosine modification"/>
    <property type="evidence" value="ECO:0007669"/>
    <property type="project" value="UniProtKB-UniRule"/>
</dbReference>
<dbReference type="CDD" id="cd24133">
    <property type="entry name" value="ASKHA_NBD_TsaD_bac"/>
    <property type="match status" value="1"/>
</dbReference>
<dbReference type="FunFam" id="3.30.420.40:FF:000012">
    <property type="entry name" value="tRNA N6-adenosine threonylcarbamoyltransferase"/>
    <property type="match status" value="1"/>
</dbReference>
<dbReference type="FunFam" id="3.30.420.40:FF:000040">
    <property type="entry name" value="tRNA N6-adenosine threonylcarbamoyltransferase"/>
    <property type="match status" value="1"/>
</dbReference>
<dbReference type="Gene3D" id="3.30.420.40">
    <property type="match status" value="2"/>
</dbReference>
<dbReference type="HAMAP" id="MF_01445">
    <property type="entry name" value="TsaD"/>
    <property type="match status" value="1"/>
</dbReference>
<dbReference type="InterPro" id="IPR043129">
    <property type="entry name" value="ATPase_NBD"/>
</dbReference>
<dbReference type="InterPro" id="IPR000905">
    <property type="entry name" value="Gcp-like_dom"/>
</dbReference>
<dbReference type="InterPro" id="IPR017861">
    <property type="entry name" value="KAE1/TsaD"/>
</dbReference>
<dbReference type="InterPro" id="IPR017860">
    <property type="entry name" value="Peptidase_M22_CS"/>
</dbReference>
<dbReference type="InterPro" id="IPR022450">
    <property type="entry name" value="TsaD"/>
</dbReference>
<dbReference type="NCBIfam" id="TIGR00329">
    <property type="entry name" value="gcp_kae1"/>
    <property type="match status" value="1"/>
</dbReference>
<dbReference type="NCBIfam" id="TIGR03723">
    <property type="entry name" value="T6A_TsaD_YgjD"/>
    <property type="match status" value="1"/>
</dbReference>
<dbReference type="PANTHER" id="PTHR11735">
    <property type="entry name" value="TRNA N6-ADENOSINE THREONYLCARBAMOYLTRANSFERASE"/>
    <property type="match status" value="1"/>
</dbReference>
<dbReference type="PANTHER" id="PTHR11735:SF6">
    <property type="entry name" value="TRNA N6-ADENOSINE THREONYLCARBAMOYLTRANSFERASE, MITOCHONDRIAL"/>
    <property type="match status" value="1"/>
</dbReference>
<dbReference type="Pfam" id="PF00814">
    <property type="entry name" value="TsaD"/>
    <property type="match status" value="1"/>
</dbReference>
<dbReference type="PRINTS" id="PR00789">
    <property type="entry name" value="OSIALOPTASE"/>
</dbReference>
<dbReference type="SUPFAM" id="SSF53067">
    <property type="entry name" value="Actin-like ATPase domain"/>
    <property type="match status" value="2"/>
</dbReference>
<dbReference type="PROSITE" id="PS01016">
    <property type="entry name" value="GLYCOPROTEASE"/>
    <property type="match status" value="1"/>
</dbReference>
<reference key="1">
    <citation type="submission" date="2007-05" db="EMBL/GenBank/DDBJ databases">
        <title>Complete sequence of chromosome of Staphylococcus aureus subsp. aureus JH9.</title>
        <authorList>
            <consortium name="US DOE Joint Genome Institute"/>
            <person name="Copeland A."/>
            <person name="Lucas S."/>
            <person name="Lapidus A."/>
            <person name="Barry K."/>
            <person name="Detter J.C."/>
            <person name="Glavina del Rio T."/>
            <person name="Hammon N."/>
            <person name="Israni S."/>
            <person name="Pitluck S."/>
            <person name="Chain P."/>
            <person name="Malfatti S."/>
            <person name="Shin M."/>
            <person name="Vergez L."/>
            <person name="Schmutz J."/>
            <person name="Larimer F."/>
            <person name="Land M."/>
            <person name="Hauser L."/>
            <person name="Kyrpides N."/>
            <person name="Kim E."/>
            <person name="Tomasz A."/>
            <person name="Richardson P."/>
        </authorList>
    </citation>
    <scope>NUCLEOTIDE SEQUENCE [LARGE SCALE GENOMIC DNA]</scope>
    <source>
        <strain>JH9</strain>
    </source>
</reference>
<keyword id="KW-0012">Acyltransferase</keyword>
<keyword id="KW-0963">Cytoplasm</keyword>
<keyword id="KW-0408">Iron</keyword>
<keyword id="KW-0479">Metal-binding</keyword>
<keyword id="KW-0808">Transferase</keyword>
<keyword id="KW-0819">tRNA processing</keyword>
<feature type="chain" id="PRO_1000087494" description="tRNA N6-adenosine threonylcarbamoyltransferase">
    <location>
        <begin position="1"/>
        <end position="341"/>
    </location>
</feature>
<feature type="binding site" evidence="1">
    <location>
        <position position="115"/>
    </location>
    <ligand>
        <name>Fe cation</name>
        <dbReference type="ChEBI" id="CHEBI:24875"/>
    </ligand>
</feature>
<feature type="binding site" evidence="1">
    <location>
        <position position="119"/>
    </location>
    <ligand>
        <name>Fe cation</name>
        <dbReference type="ChEBI" id="CHEBI:24875"/>
    </ligand>
</feature>
<feature type="binding site" evidence="1">
    <location>
        <begin position="137"/>
        <end position="141"/>
    </location>
    <ligand>
        <name>substrate</name>
    </ligand>
</feature>
<feature type="binding site" evidence="1">
    <location>
        <position position="170"/>
    </location>
    <ligand>
        <name>substrate</name>
    </ligand>
</feature>
<feature type="binding site" evidence="1">
    <location>
        <position position="183"/>
    </location>
    <ligand>
        <name>substrate</name>
    </ligand>
</feature>
<feature type="binding site" evidence="1">
    <location>
        <position position="187"/>
    </location>
    <ligand>
        <name>substrate</name>
    </ligand>
</feature>
<feature type="binding site" evidence="1">
    <location>
        <position position="276"/>
    </location>
    <ligand>
        <name>substrate</name>
    </ligand>
</feature>
<feature type="binding site" evidence="1">
    <location>
        <position position="304"/>
    </location>
    <ligand>
        <name>Fe cation</name>
        <dbReference type="ChEBI" id="CHEBI:24875"/>
    </ligand>
</feature>